<dbReference type="EC" id="2.7.7.48" evidence="1"/>
<dbReference type="EC" id="3.1.-.-" evidence="1 4"/>
<dbReference type="EMBL" id="J04331">
    <property type="protein sequence ID" value="AAA66591.1"/>
    <property type="molecule type" value="Genomic_RNA"/>
</dbReference>
<dbReference type="EMBL" id="AY847351">
    <property type="protein sequence ID" value="AAX49344.1"/>
    <property type="molecule type" value="Genomic_RNA"/>
</dbReference>
<dbReference type="EMBL" id="DQ361066">
    <property type="protein sequence ID" value="ABC96004.1"/>
    <property type="molecule type" value="Genomic_RNA"/>
</dbReference>
<dbReference type="EMBL" id="M18381">
    <property type="protein sequence ID" value="AAA46258.1"/>
    <property type="status" value="ALT_SEQ"/>
    <property type="molecule type" value="Genomic_RNA"/>
</dbReference>
<dbReference type="EMBL" id="M18382">
    <property type="protein sequence ID" value="AAA46259.1"/>
    <property type="molecule type" value="Genomic_RNA"/>
</dbReference>
<dbReference type="EMBL" id="M18383">
    <property type="protein sequence ID" value="AAA46260.1"/>
    <property type="status" value="ALT_SEQ"/>
    <property type="molecule type" value="Genomic_RNA"/>
</dbReference>
<dbReference type="PIR" id="A30181">
    <property type="entry name" value="RRXPLC"/>
</dbReference>
<dbReference type="RefSeq" id="NP_694845.1">
    <property type="nucleotide sequence ID" value="NC_004291.1"/>
</dbReference>
<dbReference type="PDB" id="3JSB">
    <property type="method" value="X-ray"/>
    <property type="resolution" value="2.13 A"/>
    <property type="chains" value="A/B=2-197"/>
</dbReference>
<dbReference type="PDB" id="5LTF">
    <property type="method" value="X-ray"/>
    <property type="resolution" value="2.43 A"/>
    <property type="chains" value="A/B=2-197"/>
</dbReference>
<dbReference type="PDB" id="5LTN">
    <property type="method" value="X-ray"/>
    <property type="resolution" value="1.88 A"/>
    <property type="chains" value="A/B=2-197"/>
</dbReference>
<dbReference type="PDB" id="5LTS">
    <property type="method" value="X-ray"/>
    <property type="resolution" value="2.51 A"/>
    <property type="chains" value="A/B=2-197"/>
</dbReference>
<dbReference type="PDB" id="5T2T">
    <property type="method" value="X-ray"/>
    <property type="resolution" value="1.97 A"/>
    <property type="chains" value="A/B=2-197"/>
</dbReference>
<dbReference type="PDB" id="7X6S">
    <property type="method" value="EM"/>
    <property type="resolution" value="3.40 A"/>
    <property type="chains" value="A=1-2210"/>
</dbReference>
<dbReference type="PDB" id="7X6V">
    <property type="method" value="EM"/>
    <property type="resolution" value="3.60 A"/>
    <property type="chains" value="A=1-2210"/>
</dbReference>
<dbReference type="PDBsum" id="3JSB"/>
<dbReference type="PDBsum" id="5LTF"/>
<dbReference type="PDBsum" id="5LTN"/>
<dbReference type="PDBsum" id="5LTS"/>
<dbReference type="PDBsum" id="5T2T"/>
<dbReference type="PDBsum" id="7X6S"/>
<dbReference type="PDBsum" id="7X6V"/>
<dbReference type="SMR" id="P14240"/>
<dbReference type="IntAct" id="P14240">
    <property type="interactions" value="228"/>
</dbReference>
<dbReference type="MINT" id="P14240"/>
<dbReference type="KEGG" id="vg:956589"/>
<dbReference type="EvolutionaryTrace" id="P14240"/>
<dbReference type="Proteomes" id="UP000002474">
    <property type="component" value="Genome"/>
</dbReference>
<dbReference type="Proteomes" id="UP000121528">
    <property type="component" value="Genome"/>
</dbReference>
<dbReference type="Proteomes" id="UP000204492">
    <property type="component" value="Genome"/>
</dbReference>
<dbReference type="GO" id="GO:0030430">
    <property type="term" value="C:host cell cytoplasm"/>
    <property type="evidence" value="ECO:0007669"/>
    <property type="project" value="UniProtKB-SubCell"/>
</dbReference>
<dbReference type="GO" id="GO:0044423">
    <property type="term" value="C:virion component"/>
    <property type="evidence" value="ECO:0007669"/>
    <property type="project" value="UniProtKB-KW"/>
</dbReference>
<dbReference type="GO" id="GO:0016787">
    <property type="term" value="F:hydrolase activity"/>
    <property type="evidence" value="ECO:0007669"/>
    <property type="project" value="UniProtKB-KW"/>
</dbReference>
<dbReference type="GO" id="GO:0046872">
    <property type="term" value="F:metal ion binding"/>
    <property type="evidence" value="ECO:0007669"/>
    <property type="project" value="UniProtKB-KW"/>
</dbReference>
<dbReference type="GO" id="GO:0000166">
    <property type="term" value="F:nucleotide binding"/>
    <property type="evidence" value="ECO:0007669"/>
    <property type="project" value="UniProtKB-UniRule"/>
</dbReference>
<dbReference type="GO" id="GO:0003968">
    <property type="term" value="F:RNA-directed RNA polymerase activity"/>
    <property type="evidence" value="ECO:0007669"/>
    <property type="project" value="UniProtKB-UniRule"/>
</dbReference>
<dbReference type="GO" id="GO:0075526">
    <property type="term" value="P:cap snatching"/>
    <property type="evidence" value="ECO:0007669"/>
    <property type="project" value="UniProtKB-UniRule"/>
</dbReference>
<dbReference type="GO" id="GO:0039689">
    <property type="term" value="P:negative stranded viral RNA replication"/>
    <property type="evidence" value="ECO:0000314"/>
    <property type="project" value="UniProtKB"/>
</dbReference>
<dbReference type="GO" id="GO:0039696">
    <property type="term" value="P:RNA-templated viral transcription"/>
    <property type="evidence" value="ECO:0000314"/>
    <property type="project" value="UniProtKB"/>
</dbReference>
<dbReference type="FunFam" id="3.30.70.2640:FF:000001">
    <property type="entry name" value="RNA-directed RNA polymerase L"/>
    <property type="match status" value="1"/>
</dbReference>
<dbReference type="Gene3D" id="3.30.70.2640">
    <property type="entry name" value="Arenavirus RNA polymerase"/>
    <property type="match status" value="1"/>
</dbReference>
<dbReference type="Gene3D" id="1.20.1440.300">
    <property type="entry name" value="RNA-directed RNA polymerase L, helical domain"/>
    <property type="match status" value="1"/>
</dbReference>
<dbReference type="HAMAP" id="MF_04086">
    <property type="entry name" value="ARENA_L"/>
    <property type="match status" value="1"/>
</dbReference>
<dbReference type="InterPro" id="IPR026382">
    <property type="entry name" value="CapSnatch_arenavir"/>
</dbReference>
<dbReference type="InterPro" id="IPR048006">
    <property type="entry name" value="CapSnatch_bunyavir"/>
</dbReference>
<dbReference type="InterPro" id="IPR007099">
    <property type="entry name" value="RNA-dir_pol_NSvirus"/>
</dbReference>
<dbReference type="InterPro" id="IPR010453">
    <property type="entry name" value="RNA_pol_arenavir"/>
</dbReference>
<dbReference type="NCBIfam" id="TIGR04202">
    <property type="entry name" value="capSnatchArena"/>
    <property type="match status" value="1"/>
</dbReference>
<dbReference type="Pfam" id="PF06317">
    <property type="entry name" value="Arena_RNA_pol"/>
    <property type="match status" value="1"/>
</dbReference>
<dbReference type="Pfam" id="PF17296">
    <property type="entry name" value="ArenaCapSnatch"/>
    <property type="match status" value="1"/>
</dbReference>
<dbReference type="PIRSF" id="PIRSF000836">
    <property type="entry name" value="L_ArenaV"/>
    <property type="match status" value="1"/>
</dbReference>
<dbReference type="PROSITE" id="PS50525">
    <property type="entry name" value="RDRP_SSRNA_NEG_SEG"/>
    <property type="match status" value="1"/>
</dbReference>
<accession>P14240</accession>
<accession>Q27V69</accession>
<accession>Q49K84</accession>
<organismHost>
    <name type="scientific">Homo sapiens</name>
    <name type="common">Human</name>
    <dbReference type="NCBI Taxonomy" id="9606"/>
</organismHost>
<organismHost>
    <name type="scientific">Mesocricetus auratus</name>
    <name type="common">Golden hamster</name>
    <dbReference type="NCBI Taxonomy" id="10036"/>
</organismHost>
<organismHost>
    <name type="scientific">Mus musculus</name>
    <name type="common">Mouse</name>
    <dbReference type="NCBI Taxonomy" id="10090"/>
</organismHost>
<name>L_LYCVA</name>
<feature type="chain" id="PRO_0000079198" description="RNA-directed RNA polymerase L">
    <location>
        <begin position="1"/>
        <end position="2210"/>
    </location>
</feature>
<feature type="domain" description="RdRp catalytic" evidence="1">
    <location>
        <begin position="1166"/>
        <end position="1360"/>
    </location>
</feature>
<feature type="region of interest" description="Endonuclease" evidence="1">
    <location>
        <begin position="26"/>
        <end position="287"/>
    </location>
</feature>
<feature type="active site" evidence="1">
    <location>
        <position position="115"/>
    </location>
</feature>
<feature type="binding site" evidence="1">
    <location>
        <position position="51"/>
    </location>
    <ligand>
        <name>Mn(2+)</name>
        <dbReference type="ChEBI" id="CHEBI:29035"/>
        <label>1</label>
    </ligand>
</feature>
<feature type="binding site" evidence="1">
    <location>
        <position position="89"/>
    </location>
    <ligand>
        <name>Mn(2+)</name>
        <dbReference type="ChEBI" id="CHEBI:29035"/>
        <label>1</label>
    </ligand>
</feature>
<feature type="binding site" evidence="1">
    <location>
        <position position="89"/>
    </location>
    <ligand>
        <name>Mn(2+)</name>
        <dbReference type="ChEBI" id="CHEBI:29035"/>
        <label>2</label>
    </ligand>
</feature>
<feature type="binding site" evidence="1">
    <location>
        <position position="102"/>
    </location>
    <ligand>
        <name>Mn(2+)</name>
        <dbReference type="ChEBI" id="CHEBI:29035"/>
        <label>1</label>
    </ligand>
</feature>
<feature type="binding site" evidence="1">
    <location>
        <position position="1322"/>
    </location>
    <ligand>
        <name>Mg(2+)</name>
        <dbReference type="ChEBI" id="CHEBI:18420"/>
        <note>catalytic; for RdRp activity</note>
    </ligand>
</feature>
<feature type="sequence variant" description="In strain: Isolate Armstrong 53b and Isolate Armstrong-derived variant Cl13.">
    <original>S</original>
    <variation>T</variation>
    <location>
        <position position="108"/>
    </location>
</feature>
<feature type="sequence variant" description="In strain: Isolate Armstrong-derived variant Cl13.">
    <original>K</original>
    <variation>Q</variation>
    <location>
        <position position="1079"/>
    </location>
</feature>
<feature type="sequence variant" description="In strain: Isolate Armstrong 53b and Isolate Armstrong-derived variant Cl13.">
    <original>T</original>
    <variation>K</variation>
    <location>
        <position position="1513"/>
    </location>
</feature>
<feature type="sequence variant" description="In strain: Isolate Armstrong 53b and Isolate Armstrong-derived variant Cl13.">
    <original>I</original>
    <variation>T</variation>
    <location>
        <position position="2185"/>
    </location>
</feature>
<feature type="mutagenesis site" description="About 70% loss of endonuclease activity." evidence="3">
    <original>E</original>
    <variation>A</variation>
    <location>
        <position position="51"/>
    </location>
</feature>
<feature type="mutagenesis site" description="About 50% loss of endonuclease activity." evidence="3">
    <original>D</original>
    <variation>A</variation>
    <location>
        <position position="89"/>
    </location>
</feature>
<feature type="mutagenesis site" description="About 90% loss of endonuclease activity." evidence="3">
    <original>E</original>
    <variation>A</variation>
    <location>
        <position position="102"/>
    </location>
</feature>
<feature type="mutagenesis site" description="About 80% loss of endonuclease activity." evidence="3">
    <original>K</original>
    <variation>A</variation>
    <location>
        <position position="115"/>
    </location>
</feature>
<feature type="mutagenesis site" description="Complete loss of endonuclease activity." evidence="3">
    <original>D</original>
    <variation>A</variation>
    <location>
        <position position="119"/>
    </location>
</feature>
<feature type="mutagenesis site" description="About 70% loss of endonuclease activity." evidence="3">
    <original>K</original>
    <variation>A</variation>
    <location>
        <position position="122"/>
    </location>
</feature>
<feature type="mutagenesis site" description="Complete loss of polymerase activity." evidence="2">
    <original>D</original>
    <variation>A</variation>
    <location>
        <position position="1182"/>
    </location>
</feature>
<feature type="mutagenesis site" description="Complete loss of polymerase activity." evidence="2">
    <original>D</original>
    <variation>E</variation>
    <location>
        <position position="1182"/>
    </location>
</feature>
<feature type="mutagenesis site" description="Complete loss of polymerase activity." evidence="2">
    <original>D</original>
    <variation>N</variation>
    <location>
        <position position="1182"/>
    </location>
</feature>
<feature type="mutagenesis site" description="Complete loss of polymerase activity." evidence="2">
    <original>S</original>
    <variation>G</variation>
    <location>
        <position position="1320"/>
    </location>
</feature>
<feature type="mutagenesis site" description="Complete loss of polymerase activity." evidence="2">
    <original>D</original>
    <variation>A</variation>
    <location>
        <position position="1321"/>
    </location>
</feature>
<feature type="mutagenesis site" description="Complete loss of polymerase activity." evidence="2">
    <original>D</original>
    <variation>N</variation>
    <location>
        <position position="1321"/>
    </location>
</feature>
<feature type="sequence conflict" description="In Ref. 4; AAA46258." ref="4">
    <original>L</original>
    <variation>Y</variation>
    <location>
        <position position="164"/>
    </location>
</feature>
<feature type="sequence conflict" description="In Ref. 4; AAA46258." ref="4">
    <original>Q</original>
    <variation>R</variation>
    <location>
        <position position="354"/>
    </location>
</feature>
<feature type="sequence conflict" description="In Ref. 4; AAA46258." ref="4">
    <original>K</original>
    <variation>E</variation>
    <location>
        <position position="361"/>
    </location>
</feature>
<feature type="sequence conflict" description="In Ref. 4; AAA46258." ref="4">
    <original>H</original>
    <variation>D</variation>
    <location>
        <position position="382"/>
    </location>
</feature>
<feature type="sequence conflict" description="In Ref. 4; AAA46259." ref="4">
    <original>C</original>
    <variation>S</variation>
    <location>
        <position position="552"/>
    </location>
</feature>
<feature type="sequence conflict" description="In Ref. 4; AAA46260." ref="4">
    <original>R</original>
    <variation>L</variation>
    <location>
        <position position="1727"/>
    </location>
</feature>
<feature type="helix" evidence="14">
    <location>
        <begin position="2"/>
        <end position="15"/>
    </location>
</feature>
<feature type="helix" evidence="14">
    <location>
        <begin position="20"/>
        <end position="22"/>
    </location>
</feature>
<feature type="helix" evidence="14">
    <location>
        <begin position="23"/>
        <end position="30"/>
    </location>
</feature>
<feature type="helix" evidence="14">
    <location>
        <begin position="35"/>
        <end position="58"/>
    </location>
</feature>
<feature type="strand" evidence="14">
    <location>
        <begin position="60"/>
        <end position="62"/>
    </location>
</feature>
<feature type="helix" evidence="14">
    <location>
        <begin position="69"/>
        <end position="75"/>
    </location>
</feature>
<feature type="strand" evidence="14">
    <location>
        <begin position="89"/>
        <end position="94"/>
    </location>
</feature>
<feature type="strand" evidence="14">
    <location>
        <begin position="97"/>
        <end position="105"/>
    </location>
</feature>
<feature type="helix" evidence="14">
    <location>
        <begin position="109"/>
        <end position="124"/>
    </location>
</feature>
<feature type="helix" evidence="14">
    <location>
        <begin position="127"/>
        <end position="132"/>
    </location>
</feature>
<feature type="strand" evidence="14">
    <location>
        <begin position="136"/>
        <end position="146"/>
    </location>
</feature>
<feature type="helix" evidence="14">
    <location>
        <begin position="154"/>
        <end position="179"/>
    </location>
</feature>
<feature type="helix" evidence="14">
    <location>
        <begin position="184"/>
        <end position="189"/>
    </location>
</feature>
<feature type="helix" evidence="14">
    <location>
        <begin position="190"/>
        <end position="192"/>
    </location>
</feature>
<feature type="turn" evidence="15">
    <location>
        <begin position="214"/>
        <end position="216"/>
    </location>
</feature>
<feature type="helix" evidence="15">
    <location>
        <begin position="217"/>
        <end position="220"/>
    </location>
</feature>
<feature type="helix" evidence="15">
    <location>
        <begin position="235"/>
        <end position="241"/>
    </location>
</feature>
<feature type="helix" evidence="15">
    <location>
        <begin position="246"/>
        <end position="248"/>
    </location>
</feature>
<feature type="turn" evidence="15">
    <location>
        <begin position="249"/>
        <end position="252"/>
    </location>
</feature>
<feature type="strand" evidence="15">
    <location>
        <begin position="257"/>
        <end position="259"/>
    </location>
</feature>
<feature type="helix" evidence="15">
    <location>
        <begin position="263"/>
        <end position="271"/>
    </location>
</feature>
<feature type="helix" evidence="15">
    <location>
        <begin position="284"/>
        <end position="291"/>
    </location>
</feature>
<feature type="strand" evidence="15">
    <location>
        <begin position="294"/>
        <end position="297"/>
    </location>
</feature>
<feature type="helix" evidence="15">
    <location>
        <begin position="298"/>
        <end position="301"/>
    </location>
</feature>
<feature type="strand" evidence="15">
    <location>
        <begin position="317"/>
        <end position="319"/>
    </location>
</feature>
<feature type="helix" evidence="15">
    <location>
        <begin position="320"/>
        <end position="326"/>
    </location>
</feature>
<feature type="turn" evidence="15">
    <location>
        <begin position="336"/>
        <end position="338"/>
    </location>
</feature>
<feature type="helix" evidence="15">
    <location>
        <begin position="339"/>
        <end position="345"/>
    </location>
</feature>
<feature type="turn" evidence="15">
    <location>
        <begin position="346"/>
        <end position="352"/>
    </location>
</feature>
<feature type="turn" evidence="15">
    <location>
        <begin position="386"/>
        <end position="391"/>
    </location>
</feature>
<feature type="turn" evidence="15">
    <location>
        <begin position="393"/>
        <end position="395"/>
    </location>
</feature>
<feature type="turn" evidence="15">
    <location>
        <begin position="397"/>
        <end position="399"/>
    </location>
</feature>
<feature type="turn" evidence="15">
    <location>
        <begin position="412"/>
        <end position="419"/>
    </location>
</feature>
<feature type="helix" evidence="15">
    <location>
        <begin position="420"/>
        <end position="429"/>
    </location>
</feature>
<feature type="turn" evidence="15">
    <location>
        <begin position="432"/>
        <end position="435"/>
    </location>
</feature>
<feature type="helix" evidence="15">
    <location>
        <begin position="439"/>
        <end position="446"/>
    </location>
</feature>
<feature type="turn" evidence="15">
    <location>
        <begin position="452"/>
        <end position="460"/>
    </location>
</feature>
<feature type="turn" evidence="15">
    <location>
        <begin position="484"/>
        <end position="488"/>
    </location>
</feature>
<feature type="helix" evidence="15">
    <location>
        <begin position="489"/>
        <end position="492"/>
    </location>
</feature>
<feature type="helix" evidence="15">
    <location>
        <begin position="494"/>
        <end position="497"/>
    </location>
</feature>
<feature type="turn" evidence="15">
    <location>
        <begin position="498"/>
        <end position="501"/>
    </location>
</feature>
<feature type="strand" evidence="15">
    <location>
        <begin position="547"/>
        <end position="549"/>
    </location>
</feature>
<feature type="strand" evidence="15">
    <location>
        <begin position="551"/>
        <end position="553"/>
    </location>
</feature>
<feature type="strand" evidence="15">
    <location>
        <begin position="565"/>
        <end position="567"/>
    </location>
</feature>
<feature type="helix" evidence="15">
    <location>
        <begin position="569"/>
        <end position="571"/>
    </location>
</feature>
<feature type="strand" evidence="15">
    <location>
        <begin position="579"/>
        <end position="581"/>
    </location>
</feature>
<feature type="helix" evidence="15">
    <location>
        <begin position="582"/>
        <end position="589"/>
    </location>
</feature>
<feature type="turn" evidence="15">
    <location>
        <begin position="590"/>
        <end position="592"/>
    </location>
</feature>
<feature type="helix" evidence="15">
    <location>
        <begin position="596"/>
        <end position="598"/>
    </location>
</feature>
<feature type="turn" evidence="15">
    <location>
        <begin position="599"/>
        <end position="602"/>
    </location>
</feature>
<feature type="helix" evidence="15">
    <location>
        <begin position="603"/>
        <end position="619"/>
    </location>
</feature>
<feature type="helix" evidence="15">
    <location>
        <begin position="623"/>
        <end position="640"/>
    </location>
</feature>
<feature type="helix" evidence="15">
    <location>
        <begin position="648"/>
        <end position="650"/>
    </location>
</feature>
<feature type="helix" evidence="15">
    <location>
        <begin position="660"/>
        <end position="675"/>
    </location>
</feature>
<feature type="strand" evidence="15">
    <location>
        <begin position="677"/>
        <end position="679"/>
    </location>
</feature>
<feature type="strand" evidence="15">
    <location>
        <begin position="681"/>
        <end position="683"/>
    </location>
</feature>
<feature type="helix" evidence="15">
    <location>
        <begin position="684"/>
        <end position="696"/>
    </location>
</feature>
<feature type="helix" evidence="15">
    <location>
        <begin position="697"/>
        <end position="700"/>
    </location>
</feature>
<feature type="helix" evidence="15">
    <location>
        <begin position="709"/>
        <end position="726"/>
    </location>
</feature>
<feature type="helix" evidence="15">
    <location>
        <begin position="738"/>
        <end position="751"/>
    </location>
</feature>
<feature type="strand" evidence="15">
    <location>
        <begin position="760"/>
        <end position="762"/>
    </location>
</feature>
<feature type="turn" evidence="15">
    <location>
        <begin position="767"/>
        <end position="769"/>
    </location>
</feature>
<feature type="helix" evidence="15">
    <location>
        <begin position="770"/>
        <end position="778"/>
    </location>
</feature>
<feature type="helix" evidence="15">
    <location>
        <begin position="835"/>
        <end position="843"/>
    </location>
</feature>
<feature type="helix" evidence="15">
    <location>
        <begin position="858"/>
        <end position="866"/>
    </location>
</feature>
<feature type="strand" evidence="15">
    <location>
        <begin position="877"/>
        <end position="879"/>
    </location>
</feature>
<feature type="helix" evidence="15">
    <location>
        <begin position="889"/>
        <end position="897"/>
    </location>
</feature>
<feature type="helix" evidence="15">
    <location>
        <begin position="907"/>
        <end position="917"/>
    </location>
</feature>
<feature type="helix" evidence="15">
    <location>
        <begin position="937"/>
        <end position="953"/>
    </location>
</feature>
<feature type="helix" evidence="15">
    <location>
        <begin position="1085"/>
        <end position="1087"/>
    </location>
</feature>
<feature type="turn" evidence="15">
    <location>
        <begin position="1088"/>
        <end position="1090"/>
    </location>
</feature>
<feature type="strand" evidence="15">
    <location>
        <begin position="1113"/>
        <end position="1115"/>
    </location>
</feature>
<feature type="strand" evidence="15">
    <location>
        <begin position="1119"/>
        <end position="1121"/>
    </location>
</feature>
<feature type="strand" evidence="15">
    <location>
        <begin position="1124"/>
        <end position="1126"/>
    </location>
</feature>
<feature type="helix" evidence="15">
    <location>
        <begin position="1130"/>
        <end position="1147"/>
    </location>
</feature>
<feature type="helix" evidence="15">
    <location>
        <begin position="1158"/>
        <end position="1172"/>
    </location>
</feature>
<feature type="strand" evidence="15">
    <location>
        <begin position="1183"/>
        <end position="1185"/>
    </location>
</feature>
<feature type="helix" evidence="15">
    <location>
        <begin position="1192"/>
        <end position="1199"/>
    </location>
</feature>
<feature type="turn" evidence="15">
    <location>
        <begin position="1207"/>
        <end position="1210"/>
    </location>
</feature>
<feature type="helix" evidence="15">
    <location>
        <begin position="1211"/>
        <end position="1225"/>
    </location>
</feature>
<feature type="strand" evidence="15">
    <location>
        <begin position="1228"/>
        <end position="1230"/>
    </location>
</feature>
<feature type="helix" evidence="15">
    <location>
        <begin position="1233"/>
        <end position="1248"/>
    </location>
</feature>
<feature type="helix" evidence="15">
    <location>
        <begin position="1259"/>
        <end position="1261"/>
    </location>
</feature>
<feature type="helix" evidence="15">
    <location>
        <begin position="1263"/>
        <end position="1270"/>
    </location>
</feature>
<feature type="turn" evidence="15">
    <location>
        <begin position="1284"/>
        <end position="1289"/>
    </location>
</feature>
<feature type="helix" evidence="15">
    <location>
        <begin position="1290"/>
        <end position="1310"/>
    </location>
</feature>
<feature type="strand" evidence="15">
    <location>
        <begin position="1315"/>
        <end position="1318"/>
    </location>
</feature>
<feature type="strand" evidence="15">
    <location>
        <begin position="1323"/>
        <end position="1326"/>
    </location>
</feature>
<feature type="helix" evidence="15">
    <location>
        <begin position="1329"/>
        <end position="1331"/>
    </location>
</feature>
<feature type="helix" evidence="15">
    <location>
        <begin position="1333"/>
        <end position="1337"/>
    </location>
</feature>
<feature type="helix" evidence="15">
    <location>
        <begin position="1342"/>
        <end position="1355"/>
    </location>
</feature>
<feature type="strand" evidence="15">
    <location>
        <begin position="1372"/>
        <end position="1375"/>
    </location>
</feature>
<feature type="strand" evidence="15">
    <location>
        <begin position="1380"/>
        <end position="1382"/>
    </location>
</feature>
<feature type="helix" evidence="15">
    <location>
        <begin position="1387"/>
        <end position="1394"/>
    </location>
</feature>
<feature type="helix" evidence="15">
    <location>
        <begin position="1403"/>
        <end position="1419"/>
    </location>
</feature>
<feature type="helix" evidence="15">
    <location>
        <begin position="1424"/>
        <end position="1440"/>
    </location>
</feature>
<feature type="strand" evidence="15">
    <location>
        <begin position="1459"/>
        <end position="1461"/>
    </location>
</feature>
<feature type="helix" evidence="15">
    <location>
        <begin position="1464"/>
        <end position="1475"/>
    </location>
</feature>
<feature type="turn" evidence="15">
    <location>
        <begin position="1477"/>
        <end position="1481"/>
    </location>
</feature>
<feature type="helix" evidence="15">
    <location>
        <begin position="1485"/>
        <end position="1492"/>
    </location>
</feature>
<feature type="strand" evidence="15">
    <location>
        <begin position="1495"/>
        <end position="1498"/>
    </location>
</feature>
<feature type="helix" evidence="15">
    <location>
        <begin position="1502"/>
        <end position="1507"/>
    </location>
</feature>
<feature type="helix" evidence="15">
    <location>
        <begin position="1515"/>
        <end position="1523"/>
    </location>
</feature>
<feature type="helix" evidence="15">
    <location>
        <begin position="1530"/>
        <end position="1533"/>
    </location>
</feature>
<feature type="strand" evidence="15">
    <location>
        <begin position="1536"/>
        <end position="1538"/>
    </location>
</feature>
<feature type="strand" evidence="15">
    <location>
        <begin position="1540"/>
        <end position="1544"/>
    </location>
</feature>
<feature type="helix" evidence="15">
    <location>
        <begin position="1569"/>
        <end position="1576"/>
    </location>
</feature>
<feature type="turn" evidence="15">
    <location>
        <begin position="1604"/>
        <end position="1606"/>
    </location>
</feature>
<feature type="helix" evidence="15">
    <location>
        <begin position="1607"/>
        <end position="1613"/>
    </location>
</feature>
<feature type="helix" evidence="15">
    <location>
        <begin position="1629"/>
        <end position="1638"/>
    </location>
</feature>
<feature type="strand" evidence="15">
    <location>
        <begin position="1639"/>
        <end position="1641"/>
    </location>
</feature>
<feature type="strand" evidence="15">
    <location>
        <begin position="1647"/>
        <end position="1649"/>
    </location>
</feature>
<feature type="helix" evidence="15">
    <location>
        <begin position="1657"/>
        <end position="1659"/>
    </location>
</feature>
<feature type="strand" evidence="15">
    <location>
        <begin position="1665"/>
        <end position="1667"/>
    </location>
</feature>
<feature type="turn" evidence="15">
    <location>
        <begin position="1668"/>
        <end position="1671"/>
    </location>
</feature>
<feature type="strand" evidence="15">
    <location>
        <begin position="1672"/>
        <end position="1675"/>
    </location>
</feature>
<feature type="helix" evidence="15">
    <location>
        <begin position="1678"/>
        <end position="1688"/>
    </location>
</feature>
<feature type="helix" evidence="15">
    <location>
        <begin position="1693"/>
        <end position="1695"/>
    </location>
</feature>
<feature type="helix" evidence="15">
    <location>
        <begin position="1734"/>
        <end position="1742"/>
    </location>
</feature>
<feature type="helix" evidence="15">
    <location>
        <begin position="1748"/>
        <end position="1751"/>
    </location>
</feature>
<feature type="helix" evidence="15">
    <location>
        <begin position="1775"/>
        <end position="1784"/>
    </location>
</feature>
<feature type="turn" evidence="15">
    <location>
        <begin position="1792"/>
        <end position="1796"/>
    </location>
</feature>
<feature type="turn" evidence="15">
    <location>
        <begin position="1807"/>
        <end position="1809"/>
    </location>
</feature>
<feature type="strand" evidence="15">
    <location>
        <begin position="1810"/>
        <end position="1812"/>
    </location>
</feature>
<comment type="function">
    <text evidence="1 5 6">RNA-dependent RNA polymerase, which is responsible for the replication and transcription of the viral RNA genome using antigenomic RNA as an intermediate. During transcription, synthesizes subgenomic RNAs and assures their capping by a cap-snatching mechanism, which involves the endonuclease activity cleaving the host capped pre-mRNAs. These short capped RNAs are then used as primers for viral transcription. The 3'-end of subgenomic mRNAs molecules are heterogeneous and not polyadenylated. The replicase function is to direct synthesis of antigenomic and genomic RNA which are encapsidated and non capped. As a consequence of the use of the same enzyme for both transcription and replication, these mechanisms need to be well coordinated. These processes may be regulated by proteins N and Z in a dose-dependent manner. Z protein inhibits the viral polymerase L und thus the viral transcription and RNA synthesis (PubMed:37038286).</text>
</comment>
<comment type="catalytic activity">
    <reaction evidence="1">
        <text>RNA(n) + a ribonucleoside 5'-triphosphate = RNA(n+1) + diphosphate</text>
        <dbReference type="Rhea" id="RHEA:21248"/>
        <dbReference type="Rhea" id="RHEA-COMP:14527"/>
        <dbReference type="Rhea" id="RHEA-COMP:17342"/>
        <dbReference type="ChEBI" id="CHEBI:33019"/>
        <dbReference type="ChEBI" id="CHEBI:61557"/>
        <dbReference type="ChEBI" id="CHEBI:140395"/>
        <dbReference type="EC" id="2.7.7.48"/>
    </reaction>
</comment>
<comment type="cofactor">
    <cofactor evidence="1">
        <name>Mn(2+)</name>
        <dbReference type="ChEBI" id="CHEBI:29035"/>
    </cofactor>
    <text evidence="1">For endonuclease activity. Binds 2 Mn(2+) ions in the active site. The divalent metal ions are crucial for catalytic activity.</text>
</comment>
<comment type="cofactor">
    <cofactor evidence="1">
        <name>Mg(2+)</name>
        <dbReference type="ChEBI" id="CHEBI:18420"/>
    </cofactor>
    <cofactor evidence="1">
        <name>Mn(2+)</name>
        <dbReference type="ChEBI" id="CHEBI:29035"/>
    </cofactor>
    <text evidence="1">For polymerase activity.</text>
</comment>
<comment type="subunit">
    <text evidence="1 5">Homomultimer; the oligomeric structure is essential for the polymerase activity. Interacts with nucleoprotein N. Interacts with protein Z; this interaction inhibits viral transcription and replication, Z partially blocks the product exit tunnel for the releasing nascent RNA product.</text>
</comment>
<comment type="interaction">
    <interactant intactId="EBI-26968662">
        <id>P14240</id>
    </interactant>
    <interactant intactId="EBI-6149284">
        <id>P09992</id>
        <label>N</label>
    </interactant>
    <organismsDiffer>false</organismsDiffer>
    <experiments>2</experiments>
</comment>
<comment type="interaction">
    <interactant intactId="EBI-26968662">
        <id>P14240</id>
    </interactant>
    <interactant intactId="EBI-353779">
        <id>O00571</id>
        <label>DDX3X</label>
    </interactant>
    <organismsDiffer>true</organismsDiffer>
    <experiments>2</experiments>
</comment>
<comment type="interaction">
    <interactant intactId="EBI-26968662">
        <id>P14240</id>
    </interactant>
    <interactant intactId="EBI-81531">
        <id>P11940</id>
        <label>PABPC1</label>
    </interactant>
    <organismsDiffer>true</organismsDiffer>
    <experiments>2</experiments>
</comment>
<comment type="interaction">
    <interactant intactId="EBI-26968662">
        <id>P14240</id>
    </interactant>
    <interactant intactId="EBI-81290">
        <id>P19474</id>
        <label>TRIM21</label>
    </interactant>
    <organismsDiffer>true</organismsDiffer>
    <experiments>2</experiments>
</comment>
<comment type="subcellular location">
    <subcellularLocation>
        <location evidence="1">Virion</location>
    </subcellularLocation>
    <subcellularLocation>
        <location evidence="1">Host cytoplasm</location>
    </subcellularLocation>
</comment>
<comment type="domain">
    <text evidence="1 3">The N-terminus contains the endonuclease activity (endoN). The central region contains the RdRp activity.</text>
</comment>
<comment type="miscellaneous">
    <text evidence="1">Classified as His(-) endonuclease since it does not have a histidine upstream of the active site that coordinates the first cation. His(-) endonucleases display very low activity in vitro, although they are clearly active in vivo.</text>
</comment>
<comment type="similarity">
    <text evidence="1">Belongs to the Bunyavirales RNA polymerase family.</text>
</comment>
<sequence>MDEIISELRELCLNYIEQDERLSRQKLNFLGQREPRMVLIEGLKLLSRCIEIDSADKSGCTHNHDDKSVETILVESGIVCPGLPLIIPDGYKLIDNSLILLECFVRSSPASFEKKFIEDTNKLACIREDLAVAGVTLVPIVDGRCDYDNSFMPEWANFKFRDLLFKLLEYSNQNEKVFEESEYFRLCESLKTTIDKRSGMDSMKILKDARSTHNDEIMRMCHEGINPNMSCDDVVFGINSLFSRFRRDLESGKLKRNFQKVNPEGLIKEFSELYENLADSDDILTLSREAVESCPLMRFITAETHGHERGSETSTEYERLLSMLNKVKSLKLLNTRRRQLLNLDVLCLSSLIKQSKFKGLKNDKHWVGCCYSSVNDRLVSFHSTKEEFIRLLRNRKKSKVFRKVSFEELFRASISEFIAKIQKCLLVVGLSFEHYGLSEHLEQECHIPFTEFENFMKIGAHPIMYYTKFEDYNFQPSTEQLKNIQSLRRLSSVCLALTNSMKTSSVARLRQNQIGSVRYQVVECKEVFCQVIKLDSEEYHLLYQKTGESSRCYSIQGPDGHLISFYADPKRFFLPIFSDEVLYNMIDIMISWIRSCPDLKDCLTDIEVALRTLLLLMLTNPTKRNQKQVQSVRYLVMAIVSDFSSTSLMDKLREDLITPAEKVVYKLLRFLIKTIFGTGEKVLLSAKFKFMLNVSYLCHLITKETPDRLTDQIKCFEKFFEPKSQFGFFVNPKEAITPEEECVFYEQMKRFTSKEIDCQHTTPGVNLEAFSLMVSSFNNGTLIFKGEKKLNSLDPMTNSGCATALDLASNKSVVVNKHLNGERLLEYDFNKLLVSAVSQITESFVRKQKYKLSHSDYEYKVSKLVSRLVIGSKGEETGRSEDNLAEICFDGEEETSFFKSLEEKVNTTIARYRRGRRANDKGDGEKLTNTKGLHHLQLILTGKMAHLRKVILSEISFHLVEDFDPSCLTNDDMKFICEAVEGSTELSPLYFTSVIKDQCGLDEMAKNLCRKFFSENDWFSCMKMILLQMNANAYSGKYRHMQRQGLNFKFDWDKLEEDVRISERESNSESLSKALSLTKCMSAALKNLCFYSEESPTSYTSVGPDSGRLKFALSYKEQVGGNRELYIGDLRTKMFTRLIEDYFESFSSFFSGSCLNNDKEFENAILSMTINVREGFLNYSMDHSKWGPMMCPFLFLMFLQNLKLGDDQYVRSGKDHVSTLLTWHMHKLVEVPFPVVNAMMKSYVKSKLKLLRGSETTVTERIFRQYFEMGIVPSHISSLIDMGQGILHNASDFYGLLSERFINYCIGVIFGERPEAYTSSDDQITLFDRRLSDLVVSDPEEVLVLLEFQSHLSGLLNKFISPKSVAGRFAAEFKSRFYVWGEEVPLLTKFVSAALHNVKCKEPHQLCETIDTIADQAIANGVPVSLVNSIQRRTLDLLKYANFPLDPFLLNTNTDVKDWLDGSRGYRIQRLIEELCPNETKVVRKLVRKLHHKLKNGEFNEEFFLDLFNRDKTEAILQLGDLLGLEEDLNQLADVNWLNLNEMFPLRMVLRQKVVYPSVMTFQEERIPSLIKTLQNKLCSKFTRGAQKLLSEAINKSAFQSCISSGFIGLCKTLGSRCVRNKNRENLYIKKLLEDLTTDDHVTRVCNRDGITLYICDKQSHPEAHRDHICLLRPLLWDYICISLSNSFELGVWVLAEPTKGKNNSENLTLKHLNPCDYVARKPESSRLLEDKVNLNQVIQSVRRLYPKIFEDQLLPFMSDMSSKNMRWSPRIKFLDLCVLIDINSESLSLISHVVKWKRDEHYTVLFSDLANSHQRSDSSLVDEFVVSTRDVCKNFLKQVYFESFVREFVATTRTLGNFSWFPHKEMMPSEDGAEALGPFQSFVSKVVNKNVERPMFRNDLQFGFGWFSYRMGDVVCNAAMLIRQGLTNPKAFKSLKDLWDYMLNYTKGVLEFSISVDFTHNQNNTDCLRKFSLIFLVRCQLQNPGVAELLSCSHLFKGEIDRRMLDECLHLLRTDSVFKVNDGVFDIRSEEFEDYMEDPLILGDSLELELLGSKRILDGIRSIDFERVGPEWEPVPLTVKMGALFEGRNLVQNIIVKLETKDMKVFLAGLEGYEKISDVLGNLFLHRFRTGEHLLGSEISVILQELCIDRSILLIPLSLLPDWFAFKDCRLCFSKSRSTLMYEIVGGRFRLKGRSCDDWLGGSVAEDID</sequence>
<keyword id="KW-0002">3D-structure</keyword>
<keyword id="KW-1157">Cap snatching</keyword>
<keyword id="KW-1035">Host cytoplasm</keyword>
<keyword id="KW-0378">Hydrolase</keyword>
<keyword id="KW-0460">Magnesium</keyword>
<keyword id="KW-0464">Manganese</keyword>
<keyword id="KW-0479">Metal-binding</keyword>
<keyword id="KW-0547">Nucleotide-binding</keyword>
<keyword id="KW-0548">Nucleotidyltransferase</keyword>
<keyword id="KW-1185">Reference proteome</keyword>
<keyword id="KW-0696">RNA-directed RNA polymerase</keyword>
<keyword id="KW-0808">Transferase</keyword>
<keyword id="KW-0693">Viral RNA replication</keyword>
<keyword id="KW-0946">Virion</keyword>
<organism>
    <name type="scientific">Lymphocytic choriomeningitis virus (strain Armstrong)</name>
    <name type="common">LCMV</name>
    <dbReference type="NCBI Taxonomy" id="11624"/>
    <lineage>
        <taxon>Viruses</taxon>
        <taxon>Riboviria</taxon>
        <taxon>Orthornavirae</taxon>
        <taxon>Negarnaviricota</taxon>
        <taxon>Polyploviricotina</taxon>
        <taxon>Ellioviricetes</taxon>
        <taxon>Bunyavirales</taxon>
        <taxon>Arenaviridae</taxon>
        <taxon>Mammarenavirus</taxon>
        <taxon>Mammarenavirus choriomeningitidis</taxon>
    </lineage>
</organism>
<gene>
    <name evidence="1" type="primary">L</name>
    <name type="ordered locus">Segment L</name>
</gene>
<reference key="1">
    <citation type="journal article" date="1989" name="Virology">
        <title>The primary structure of the lymphocytic choriomeningitis virus L gene encodes a putative RNA polymerase.</title>
        <authorList>
            <person name="Salvato M.S."/>
            <person name="Shimomaye E.M."/>
            <person name="Oldstone M.B.A."/>
        </authorList>
    </citation>
    <scope>NUCLEOTIDE SEQUENCE [GENOMIC RNA]</scope>
</reference>
<reference key="2">
    <citation type="journal article" date="2005" name="J. Virol.">
        <title>Mutagenesis-induced, large fitness variations with an invariant arenavirus consensus genomic nucleotide sequence.</title>
        <authorList>
            <person name="Grande-Perez A."/>
            <person name="Gomez-Mariano G."/>
            <person name="Lowenstein P.R."/>
            <person name="Domingo E."/>
        </authorList>
    </citation>
    <scope>NUCLEOTIDE SEQUENCE [GENOMIC RNA]</scope>
    <source>
        <strain>Isolate Armstrong 53b</strain>
    </source>
</reference>
<reference key="3">
    <citation type="journal article" date="2006" name="Proc. Natl. Acad. Sci. U.S.A.">
        <title>Recovery of an arenavirus entirely from RNA polymerase I/II-driven cDNA.</title>
        <authorList>
            <person name="Flatz L."/>
            <person name="Bergthaler A."/>
            <person name="de la Torre J.C."/>
            <person name="Pinschewer D.D."/>
        </authorList>
    </citation>
    <scope>NUCLEOTIDE SEQUENCE [GENOMIC RNA]</scope>
    <source>
        <strain>Isolate Armstrong-derived variant Cl13</strain>
    </source>
</reference>
<reference key="4">
    <citation type="journal article" date="1987" name="Virology">
        <title>Analysis of the genomic L RNA segment from lymphocytic choriomeningitis virus.</title>
        <authorList>
            <person name="Singh M.K."/>
            <person name="Fuller-Pace F.V."/>
            <person name="Buchmeier M.J."/>
            <person name="Southern P.J."/>
        </authorList>
    </citation>
    <scope>NUCLEOTIDE SEQUENCE [GENOMIC RNA] OF 161-387; 424-619 AND 1646-1906</scope>
</reference>
<reference key="5">
    <citation type="journal article" date="1993" name="J. Virol.">
        <title>Concurrent sequence analysis of 5' and 3' RNA termini by intramolecular circularization reveals 5' nontemplated bases and 3' terminal heterogeneity for lymphocytic choriomeningitis virus mRNAs.</title>
        <authorList>
            <person name="Meyer B.J."/>
            <person name="Southern P.J."/>
        </authorList>
    </citation>
    <scope>FUNCTION</scope>
</reference>
<reference key="6">
    <citation type="journal article" date="2005" name="J. Virol.">
        <title>Genetic and biochemical evidence for an oligomeric structure of the functional L polymerase of the prototypic arenavirus lymphocytic choriomeningitis virus.</title>
        <authorList>
            <person name="Sanchez A.B."/>
            <person name="de la Torre J.C."/>
        </authorList>
    </citation>
    <scope>SUBUNIT</scope>
    <scope>MUTAGENESIS OF ASP-1182; SER-1320 AND ASP-1321</scope>
</reference>
<reference key="7">
    <citation type="journal article" date="2017" name="Crit. Rev. Microbiol.">
        <title>Bunyaviridae RdRps: structure, motifs, and RNA synthesis machinery.</title>
        <authorList>
            <person name="Amroun A."/>
            <person name="Priet S."/>
            <person name="de Lamballerie X."/>
            <person name="Querat G."/>
        </authorList>
    </citation>
    <scope>REVIEW</scope>
</reference>
<reference key="8">
    <citation type="journal article" date="2020" name="Trends Microbiol.">
        <title>The Cap-Snatching Mechanism of Bunyaviruses.</title>
        <authorList>
            <person name="Olschewski S."/>
            <person name="Cusack S."/>
            <person name="Rosenthal M."/>
        </authorList>
    </citation>
    <scope>REVIEW</scope>
</reference>
<reference evidence="7" key="9">
    <citation type="journal article" date="2010" name="PLoS Pathog.">
        <title>The N-terminal domain of the arenavirus L protein is an RNA endonuclease essential in mRNA transcription.</title>
        <authorList>
            <person name="Morin B."/>
            <person name="Coutard B."/>
            <person name="Lelke M."/>
            <person name="Ferron F."/>
            <person name="Kerber R."/>
            <person name="Jamal S."/>
            <person name="Frangeul A."/>
            <person name="Baronti C."/>
            <person name="Charrel R."/>
            <person name="de Lamballerie X."/>
            <person name="Vonrhein C."/>
            <person name="Lescar J."/>
            <person name="Bricogne G."/>
            <person name="Guenther S."/>
            <person name="Canard B."/>
        </authorList>
    </citation>
    <scope>X-RAY CRYSTALLOGRAPHY (2.13 ANGSTROMS) OF 2-197</scope>
    <scope>FUNCTION</scope>
    <scope>DOMAIN</scope>
    <scope>MUTAGENESIS OF GLU-51; ASP-89; GLU-102; LYS-115; ASP-119 AND LYS-122</scope>
    <scope>COFACTOR</scope>
</reference>
<reference evidence="8 9 10 11" key="10">
    <citation type="journal article" date="2018" name="IUCrJ">
        <title>Crystal structures of Lymphocytic choriomeningitis virus endonuclease domain complexed with diketo-acid ligands.</title>
        <authorList>
            <person name="Saez-Ayala M."/>
            <person name="Yekwa E.L."/>
            <person name="Carcelli M."/>
            <person name="Canard B."/>
            <person name="Alvarez K."/>
            <person name="Ferron F."/>
        </authorList>
    </citation>
    <scope>X-RAY CRYSTALLOGRAPHY (1.88 ANGSTROMS) OF 2-197</scope>
    <scope>COFACTOR</scope>
    <scope>CATALYTIC ACTIVITY</scope>
    <scope>DOMAIN</scope>
</reference>
<reference evidence="12 13" key="11">
    <citation type="journal article" date="2023" name="Protein Cell">
        <title>Structure basis for allosteric regulation of lymphocytic choriomeningitis virus polymerase function by Z matrix protein.</title>
        <authorList>
            <person name="Liu L."/>
            <person name="Wang P."/>
            <person name="Liu A."/>
            <person name="Zhang L."/>
            <person name="Yan L."/>
            <person name="Guo Y."/>
            <person name="Xiao G."/>
            <person name="Rao Z."/>
            <person name="Lou Z."/>
        </authorList>
    </citation>
    <scope>STRUCTURE BY ELECTRON MICROSCOPY (3.40 ANGSTROMS)</scope>
    <scope>INTERACTION WITH Z PROTEIN</scope>
</reference>
<protein>
    <recommendedName>
        <fullName evidence="1">RNA-directed RNA polymerase L</fullName>
        <shortName evidence="1">Protein L</shortName>
        <ecNumber evidence="1">2.7.7.48</ecNumber>
    </recommendedName>
    <alternativeName>
        <fullName evidence="1">Large structural protein</fullName>
    </alternativeName>
    <alternativeName>
        <fullName evidence="1">Replicase</fullName>
    </alternativeName>
    <alternativeName>
        <fullName evidence="1">Transcriptase</fullName>
    </alternativeName>
    <domain>
        <recommendedName>
            <fullName evidence="1">cap-snatching endonuclease</fullName>
            <ecNumber evidence="1 4">3.1.-.-</ecNumber>
        </recommendedName>
    </domain>
</protein>
<proteinExistence type="evidence at protein level"/>
<evidence type="ECO:0000255" key="1">
    <source>
        <dbReference type="HAMAP-Rule" id="MF_04086"/>
    </source>
</evidence>
<evidence type="ECO:0000269" key="2">
    <source>
    </source>
</evidence>
<evidence type="ECO:0000269" key="3">
    <source>
    </source>
</evidence>
<evidence type="ECO:0000269" key="4">
    <source>
    </source>
</evidence>
<evidence type="ECO:0000269" key="5">
    <source>
    </source>
</evidence>
<evidence type="ECO:0000269" key="6">
    <source>
    </source>
</evidence>
<evidence type="ECO:0007744" key="7">
    <source>
        <dbReference type="PDB" id="3JSB"/>
    </source>
</evidence>
<evidence type="ECO:0007744" key="8">
    <source>
        <dbReference type="PDB" id="5LTF"/>
    </source>
</evidence>
<evidence type="ECO:0007744" key="9">
    <source>
        <dbReference type="PDB" id="5LTN"/>
    </source>
</evidence>
<evidence type="ECO:0007744" key="10">
    <source>
        <dbReference type="PDB" id="5LTS"/>
    </source>
</evidence>
<evidence type="ECO:0007744" key="11">
    <source>
        <dbReference type="PDB" id="5T2T"/>
    </source>
</evidence>
<evidence type="ECO:0007744" key="12">
    <source>
        <dbReference type="PDB" id="7X6S"/>
    </source>
</evidence>
<evidence type="ECO:0007744" key="13">
    <source>
        <dbReference type="PDB" id="7X6V"/>
    </source>
</evidence>
<evidence type="ECO:0007829" key="14">
    <source>
        <dbReference type="PDB" id="5LTN"/>
    </source>
</evidence>
<evidence type="ECO:0007829" key="15">
    <source>
        <dbReference type="PDB" id="7X6S"/>
    </source>
</evidence>